<organism>
    <name type="scientific">Acinetobacter baumannii (strain AYE)</name>
    <dbReference type="NCBI Taxonomy" id="509173"/>
    <lineage>
        <taxon>Bacteria</taxon>
        <taxon>Pseudomonadati</taxon>
        <taxon>Pseudomonadota</taxon>
        <taxon>Gammaproteobacteria</taxon>
        <taxon>Moraxellales</taxon>
        <taxon>Moraxellaceae</taxon>
        <taxon>Acinetobacter</taxon>
        <taxon>Acinetobacter calcoaceticus/baumannii complex</taxon>
    </lineage>
</organism>
<evidence type="ECO:0000255" key="1">
    <source>
        <dbReference type="HAMAP-Rule" id="MF_00181"/>
    </source>
</evidence>
<comment type="function">
    <text evidence="1">Presumably involved in the processing and regular turnover of intracellular proteins. Catalyzes the removal of unsubstituted N-terminal amino acids from various peptides.</text>
</comment>
<comment type="catalytic activity">
    <reaction evidence="1">
        <text>Release of an N-terminal amino acid, Xaa-|-Yaa-, in which Xaa is preferably Leu, but may be other amino acids including Pro although not Arg or Lys, and Yaa may be Pro. Amino acid amides and methyl esters are also readily hydrolyzed, but rates on arylamides are exceedingly low.</text>
        <dbReference type="EC" id="3.4.11.1"/>
    </reaction>
</comment>
<comment type="catalytic activity">
    <reaction evidence="1">
        <text>Release of an N-terminal amino acid, preferentially leucine, but not glutamic or aspartic acids.</text>
        <dbReference type="EC" id="3.4.11.10"/>
    </reaction>
</comment>
<comment type="cofactor">
    <cofactor evidence="1">
        <name>Mn(2+)</name>
        <dbReference type="ChEBI" id="CHEBI:29035"/>
    </cofactor>
    <text evidence="1">Binds 2 manganese ions per subunit.</text>
</comment>
<comment type="subcellular location">
    <subcellularLocation>
        <location evidence="1">Cytoplasm</location>
    </subcellularLocation>
</comment>
<comment type="similarity">
    <text evidence="1">Belongs to the peptidase M17 family.</text>
</comment>
<keyword id="KW-0031">Aminopeptidase</keyword>
<keyword id="KW-0963">Cytoplasm</keyword>
<keyword id="KW-0378">Hydrolase</keyword>
<keyword id="KW-0464">Manganese</keyword>
<keyword id="KW-0479">Metal-binding</keyword>
<keyword id="KW-0645">Protease</keyword>
<sequence length="482" mass="52177">MKFTTYTTFPEQTSNESLWILVDSEQLQSNLNTYQINNLESILTATQFKANFNETLPLFGQLSTQPHSQLLGLGKAAELQAAKLAKLAQTIIKSAQNKFKHIAIDIAALPVEYHYLFALSLTQAAYGYDEFKSKKNEFVLQQVDLISSQTSLDENQLALVHAVQSGQSYARDLGNRPGNICFPEYLAEQALALAAEFPDLLKVTVLNEQQMADLGMYAFLAVSKGSERPGRIVTLEYQAQLEQAPVVLVGKGVTFDTGGISLKPGLGMDEMKFDMCGAASVLGTIRALCEARLPIHVVGAIAAAENMPSGKATRPGDIVTTMSGQTVEILNTDAEGRLVLCDTLTYIKRFNPAVVIDIATLTGACVVALGKVLSGLFSPDDTLAAELQQAGEQSFDRVWRMPVIDDYQELLDSPFADIANIGGPHGGAITAACFLERFTRDYRWAHLDVAGTAWLSGSAKGATGRPVPLLMQFLANRVSTNG</sequence>
<accession>B0VDC8</accession>
<name>AMPA_ACIBY</name>
<protein>
    <recommendedName>
        <fullName evidence="1">Probable cytosol aminopeptidase</fullName>
        <ecNumber evidence="1">3.4.11.1</ecNumber>
    </recommendedName>
    <alternativeName>
        <fullName evidence="1">Leucine aminopeptidase</fullName>
        <shortName evidence="1">LAP</shortName>
        <ecNumber evidence="1">3.4.11.10</ecNumber>
    </alternativeName>
    <alternativeName>
        <fullName evidence="1">Leucyl aminopeptidase</fullName>
    </alternativeName>
</protein>
<dbReference type="EC" id="3.4.11.1" evidence="1"/>
<dbReference type="EC" id="3.4.11.10" evidence="1"/>
<dbReference type="EMBL" id="CU459141">
    <property type="protein sequence ID" value="CAM88328.1"/>
    <property type="molecule type" value="Genomic_DNA"/>
</dbReference>
<dbReference type="RefSeq" id="WP_000673449.1">
    <property type="nucleotide sequence ID" value="NZ_JBDGFB010000019.1"/>
</dbReference>
<dbReference type="SMR" id="B0VDC8"/>
<dbReference type="MEROPS" id="M17.003"/>
<dbReference type="EnsemblBacteria" id="CAM88328">
    <property type="protein sequence ID" value="CAM88328"/>
    <property type="gene ID" value="ABAYE3540"/>
</dbReference>
<dbReference type="KEGG" id="aby:ABAYE3540"/>
<dbReference type="HOGENOM" id="CLU_013734_2_2_6"/>
<dbReference type="GO" id="GO:0005737">
    <property type="term" value="C:cytoplasm"/>
    <property type="evidence" value="ECO:0007669"/>
    <property type="project" value="UniProtKB-SubCell"/>
</dbReference>
<dbReference type="GO" id="GO:0030145">
    <property type="term" value="F:manganese ion binding"/>
    <property type="evidence" value="ECO:0007669"/>
    <property type="project" value="UniProtKB-UniRule"/>
</dbReference>
<dbReference type="GO" id="GO:0070006">
    <property type="term" value="F:metalloaminopeptidase activity"/>
    <property type="evidence" value="ECO:0007669"/>
    <property type="project" value="InterPro"/>
</dbReference>
<dbReference type="GO" id="GO:0006508">
    <property type="term" value="P:proteolysis"/>
    <property type="evidence" value="ECO:0007669"/>
    <property type="project" value="UniProtKB-KW"/>
</dbReference>
<dbReference type="CDD" id="cd00433">
    <property type="entry name" value="Peptidase_M17"/>
    <property type="match status" value="1"/>
</dbReference>
<dbReference type="FunFam" id="3.40.630.10:FF:000004">
    <property type="entry name" value="Probable cytosol aminopeptidase"/>
    <property type="match status" value="1"/>
</dbReference>
<dbReference type="Gene3D" id="3.40.220.10">
    <property type="entry name" value="Leucine Aminopeptidase, subunit E, domain 1"/>
    <property type="match status" value="1"/>
</dbReference>
<dbReference type="Gene3D" id="3.40.630.10">
    <property type="entry name" value="Zn peptidases"/>
    <property type="match status" value="1"/>
</dbReference>
<dbReference type="HAMAP" id="MF_00181">
    <property type="entry name" value="Cytosol_peptidase_M17"/>
    <property type="match status" value="1"/>
</dbReference>
<dbReference type="InterPro" id="IPR011356">
    <property type="entry name" value="Leucine_aapep/pepB"/>
</dbReference>
<dbReference type="InterPro" id="IPR043472">
    <property type="entry name" value="Macro_dom-like"/>
</dbReference>
<dbReference type="InterPro" id="IPR000819">
    <property type="entry name" value="Peptidase_M17_C"/>
</dbReference>
<dbReference type="InterPro" id="IPR023042">
    <property type="entry name" value="Peptidase_M17_leu_NH2_pept"/>
</dbReference>
<dbReference type="InterPro" id="IPR008283">
    <property type="entry name" value="Peptidase_M17_N"/>
</dbReference>
<dbReference type="NCBIfam" id="NF002074">
    <property type="entry name" value="PRK00913.1-4"/>
    <property type="match status" value="1"/>
</dbReference>
<dbReference type="PANTHER" id="PTHR11963:SF23">
    <property type="entry name" value="CYTOSOL AMINOPEPTIDASE"/>
    <property type="match status" value="1"/>
</dbReference>
<dbReference type="PANTHER" id="PTHR11963">
    <property type="entry name" value="LEUCINE AMINOPEPTIDASE-RELATED"/>
    <property type="match status" value="1"/>
</dbReference>
<dbReference type="Pfam" id="PF00883">
    <property type="entry name" value="Peptidase_M17"/>
    <property type="match status" value="1"/>
</dbReference>
<dbReference type="Pfam" id="PF02789">
    <property type="entry name" value="Peptidase_M17_N"/>
    <property type="match status" value="1"/>
</dbReference>
<dbReference type="PRINTS" id="PR00481">
    <property type="entry name" value="LAMNOPPTDASE"/>
</dbReference>
<dbReference type="SUPFAM" id="SSF52949">
    <property type="entry name" value="Macro domain-like"/>
    <property type="match status" value="1"/>
</dbReference>
<dbReference type="SUPFAM" id="SSF53187">
    <property type="entry name" value="Zn-dependent exopeptidases"/>
    <property type="match status" value="1"/>
</dbReference>
<dbReference type="PROSITE" id="PS00631">
    <property type="entry name" value="CYTOSOL_AP"/>
    <property type="match status" value="1"/>
</dbReference>
<gene>
    <name evidence="1" type="primary">pepA</name>
    <name type="ordered locus">ABAYE3540</name>
</gene>
<feature type="chain" id="PRO_1000098299" description="Probable cytosol aminopeptidase">
    <location>
        <begin position="1"/>
        <end position="482"/>
    </location>
</feature>
<feature type="active site" evidence="1">
    <location>
        <position position="263"/>
    </location>
</feature>
<feature type="active site" evidence="1">
    <location>
        <position position="337"/>
    </location>
</feature>
<feature type="binding site" evidence="1">
    <location>
        <position position="251"/>
    </location>
    <ligand>
        <name>Mn(2+)</name>
        <dbReference type="ChEBI" id="CHEBI:29035"/>
        <label>2</label>
    </ligand>
</feature>
<feature type="binding site" evidence="1">
    <location>
        <position position="256"/>
    </location>
    <ligand>
        <name>Mn(2+)</name>
        <dbReference type="ChEBI" id="CHEBI:29035"/>
        <label>1</label>
    </ligand>
</feature>
<feature type="binding site" evidence="1">
    <location>
        <position position="256"/>
    </location>
    <ligand>
        <name>Mn(2+)</name>
        <dbReference type="ChEBI" id="CHEBI:29035"/>
        <label>2</label>
    </ligand>
</feature>
<feature type="binding site" evidence="1">
    <location>
        <position position="274"/>
    </location>
    <ligand>
        <name>Mn(2+)</name>
        <dbReference type="ChEBI" id="CHEBI:29035"/>
        <label>2</label>
    </ligand>
</feature>
<feature type="binding site" evidence="1">
    <location>
        <position position="333"/>
    </location>
    <ligand>
        <name>Mn(2+)</name>
        <dbReference type="ChEBI" id="CHEBI:29035"/>
        <label>1</label>
    </ligand>
</feature>
<feature type="binding site" evidence="1">
    <location>
        <position position="335"/>
    </location>
    <ligand>
        <name>Mn(2+)</name>
        <dbReference type="ChEBI" id="CHEBI:29035"/>
        <label>1</label>
    </ligand>
</feature>
<feature type="binding site" evidence="1">
    <location>
        <position position="335"/>
    </location>
    <ligand>
        <name>Mn(2+)</name>
        <dbReference type="ChEBI" id="CHEBI:29035"/>
        <label>2</label>
    </ligand>
</feature>
<reference key="1">
    <citation type="journal article" date="2008" name="PLoS ONE">
        <title>Comparative analysis of Acinetobacters: three genomes for three lifestyles.</title>
        <authorList>
            <person name="Vallenet D."/>
            <person name="Nordmann P."/>
            <person name="Barbe V."/>
            <person name="Poirel L."/>
            <person name="Mangenot S."/>
            <person name="Bataille E."/>
            <person name="Dossat C."/>
            <person name="Gas S."/>
            <person name="Kreimeyer A."/>
            <person name="Lenoble P."/>
            <person name="Oztas S."/>
            <person name="Poulain J."/>
            <person name="Segurens B."/>
            <person name="Robert C."/>
            <person name="Abergel C."/>
            <person name="Claverie J.-M."/>
            <person name="Raoult D."/>
            <person name="Medigue C."/>
            <person name="Weissenbach J."/>
            <person name="Cruveiller S."/>
        </authorList>
    </citation>
    <scope>NUCLEOTIDE SEQUENCE [LARGE SCALE GENOMIC DNA]</scope>
    <source>
        <strain>AYE</strain>
    </source>
</reference>
<proteinExistence type="inferred from homology"/>